<proteinExistence type="evidence at protein level"/>
<keyword id="KW-0472">Membrane</keyword>
<keyword id="KW-1185">Reference proteome</keyword>
<keyword id="KW-0812">Transmembrane</keyword>
<keyword id="KW-1133">Transmembrane helix</keyword>
<dbReference type="EMBL" id="DQ235452">
    <property type="protein sequence ID" value="ABB48425.1"/>
    <property type="molecule type" value="mRNA"/>
</dbReference>
<dbReference type="EMBL" id="AL627085">
    <property type="status" value="NOT_ANNOTATED_CDS"/>
    <property type="molecule type" value="Genomic_DNA"/>
</dbReference>
<dbReference type="EMBL" id="BC132034">
    <property type="protein sequence ID" value="AAI32035.1"/>
    <property type="molecule type" value="mRNA"/>
</dbReference>
<dbReference type="EMBL" id="BC132036">
    <property type="protein sequence ID" value="AAI32037.1"/>
    <property type="molecule type" value="mRNA"/>
</dbReference>
<dbReference type="CCDS" id="CCDS18499.1"/>
<dbReference type="RefSeq" id="NP_001034213.1">
    <property type="nucleotide sequence ID" value="NM_001039124.4"/>
</dbReference>
<dbReference type="FunCoup" id="Q307W7">
    <property type="interactions" value="3"/>
</dbReference>
<dbReference type="STRING" id="10090.ENSMUSP00000095531"/>
<dbReference type="PhosphoSitePlus" id="Q307W7"/>
<dbReference type="PaxDb" id="10090-ENSMUSP00000095531"/>
<dbReference type="Antibodypedia" id="51691">
    <property type="antibodies" value="9 antibodies from 7 providers"/>
</dbReference>
<dbReference type="Ensembl" id="ENSMUST00000097918.3">
    <property type="protein sequence ID" value="ENSMUSP00000095531.3"/>
    <property type="gene ID" value="ENSMUSG00000073774.3"/>
</dbReference>
<dbReference type="GeneID" id="654462"/>
<dbReference type="KEGG" id="mmu:654462"/>
<dbReference type="UCSC" id="uc008ufo.1">
    <property type="organism name" value="mouse"/>
</dbReference>
<dbReference type="AGR" id="MGI:3614952"/>
<dbReference type="CTD" id="148930"/>
<dbReference type="MGI" id="MGI:3614952">
    <property type="gene designation" value="Kncn"/>
</dbReference>
<dbReference type="VEuPathDB" id="HostDB:ENSMUSG00000073774"/>
<dbReference type="eggNOG" id="ENOG502S6ED">
    <property type="taxonomic scope" value="Eukaryota"/>
</dbReference>
<dbReference type="GeneTree" id="ENSGT00400000024146"/>
<dbReference type="HOGENOM" id="CLU_2090155_0_0_1"/>
<dbReference type="InParanoid" id="Q307W7"/>
<dbReference type="OMA" id="RIHPNPG"/>
<dbReference type="OrthoDB" id="8900302at2759"/>
<dbReference type="TreeFam" id="TF354182"/>
<dbReference type="BioGRID-ORCS" id="654462">
    <property type="hits" value="2 hits in 76 CRISPR screens"/>
</dbReference>
<dbReference type="ChiTaRS" id="Kncn">
    <property type="organism name" value="mouse"/>
</dbReference>
<dbReference type="PRO" id="PR:Q307W7"/>
<dbReference type="Proteomes" id="UP000000589">
    <property type="component" value="Chromosome 4"/>
</dbReference>
<dbReference type="RNAct" id="Q307W7">
    <property type="molecule type" value="protein"/>
</dbReference>
<dbReference type="Bgee" id="ENSMUSG00000073774">
    <property type="expression patterns" value="Expressed in mesodermal cell in embryo and 8 other cell types or tissues"/>
</dbReference>
<dbReference type="GO" id="GO:0045177">
    <property type="term" value="C:apical part of cell"/>
    <property type="evidence" value="ECO:0000314"/>
    <property type="project" value="MGI"/>
</dbReference>
<dbReference type="GO" id="GO:0016324">
    <property type="term" value="C:apical plasma membrane"/>
    <property type="evidence" value="ECO:0000314"/>
    <property type="project" value="MGI"/>
</dbReference>
<dbReference type="GO" id="GO:0036064">
    <property type="term" value="C:ciliary basal body"/>
    <property type="evidence" value="ECO:0000314"/>
    <property type="project" value="MGI"/>
</dbReference>
<dbReference type="GO" id="GO:0032437">
    <property type="term" value="C:cuticular plate"/>
    <property type="evidence" value="ECO:0000314"/>
    <property type="project" value="MGI"/>
</dbReference>
<dbReference type="GO" id="GO:0005737">
    <property type="term" value="C:cytoplasm"/>
    <property type="evidence" value="ECO:0000314"/>
    <property type="project" value="MGI"/>
</dbReference>
<dbReference type="GO" id="GO:0060091">
    <property type="term" value="C:kinocilium"/>
    <property type="evidence" value="ECO:0000314"/>
    <property type="project" value="MGI"/>
</dbReference>
<dbReference type="GO" id="GO:0015630">
    <property type="term" value="C:microtubule cytoskeleton"/>
    <property type="evidence" value="ECO:0000314"/>
    <property type="project" value="MGI"/>
</dbReference>
<dbReference type="GO" id="GO:0043025">
    <property type="term" value="C:neuronal cell body"/>
    <property type="evidence" value="ECO:0000314"/>
    <property type="project" value="MGI"/>
</dbReference>
<dbReference type="InterPro" id="IPR027837">
    <property type="entry name" value="Kinocilin"/>
</dbReference>
<dbReference type="PANTHER" id="PTHR38497">
    <property type="entry name" value="KINOCILIN"/>
    <property type="match status" value="1"/>
</dbReference>
<dbReference type="PANTHER" id="PTHR38497:SF1">
    <property type="entry name" value="KINOCILIN"/>
    <property type="match status" value="1"/>
</dbReference>
<dbReference type="Pfam" id="PF15033">
    <property type="entry name" value="Kinocilin"/>
    <property type="match status" value="1"/>
</dbReference>
<sequence length="124" mass="12809">MDIPISTRDFRCLQLACVALGLVAGSIIIGVSVSKAAAAVGGIFLGAAGLGLLIFAYPFLKARFNLDHILPAIGNLRIHPNSGPDHGEGRSSNNSNKEGARSGLSTVTRTLEKLKPGGRGTEEG</sequence>
<comment type="function">
    <text>May play a role in stabilizing dense microtubular networks or in vesicular trafficking.</text>
</comment>
<comment type="subcellular location">
    <subcellularLocation>
        <location evidence="3">Membrane</location>
        <topology evidence="3">Multi-pass membrane protein</topology>
    </subcellularLocation>
</comment>
<comment type="tissue specificity">
    <text>Preferentially expressed in the inner ear and testis. Localizes mainly in the kinocilium of sensory cells in the inner ear. Also present in the manchette of the spermatids, a transient structure enriched in interconnected microtubules (at protein level).</text>
</comment>
<comment type="developmental stage">
    <text>First detected in the kinocilia of vestibular and auditory hair cells at embryonic days 14.5, and 18.5, respectively. In the mature vestibular hair cells, it is still present in the kinocilium. As the auditory hair cells begin to lose the kinocilium during postnatal development, it becomes distributed in an annular pattern at the apex of these cells, where it colocalizes with the tubulin belt. In mature auditory hair cells, it is also present at the level of the cuticular plate, at the base of each stereocilium. As the kinocilium regresses from developing auditory hair cells, it begins to be expressed by the pillar cells and Deiters cells, that both contain prominent transcellular and apical bundles of microtubules. Not detected in the supporting cells in the vestibular end organs (at protein level).</text>
</comment>
<gene>
    <name type="primary">Kncn</name>
    <name type="synonym">Kino</name>
</gene>
<evidence type="ECO:0000255" key="1"/>
<evidence type="ECO:0000256" key="2">
    <source>
        <dbReference type="SAM" id="MobiDB-lite"/>
    </source>
</evidence>
<evidence type="ECO:0000305" key="3"/>
<organism>
    <name type="scientific">Mus musculus</name>
    <name type="common">Mouse</name>
    <dbReference type="NCBI Taxonomy" id="10090"/>
    <lineage>
        <taxon>Eukaryota</taxon>
        <taxon>Metazoa</taxon>
        <taxon>Chordata</taxon>
        <taxon>Craniata</taxon>
        <taxon>Vertebrata</taxon>
        <taxon>Euteleostomi</taxon>
        <taxon>Mammalia</taxon>
        <taxon>Eutheria</taxon>
        <taxon>Euarchontoglires</taxon>
        <taxon>Glires</taxon>
        <taxon>Rodentia</taxon>
        <taxon>Myomorpha</taxon>
        <taxon>Muroidea</taxon>
        <taxon>Muridae</taxon>
        <taxon>Murinae</taxon>
        <taxon>Mus</taxon>
        <taxon>Mus</taxon>
    </lineage>
</organism>
<accession>Q307W7</accession>
<name>KNCN_MOUSE</name>
<reference key="1">
    <citation type="journal article" date="2005" name="Hear. Res.">
        <title>Initial characterization of kinocilin, a protein of the hair cell kinocilium.</title>
        <authorList>
            <person name="Leibovici M."/>
            <person name="Verpy E."/>
            <person name="Goodyear R.J."/>
            <person name="Zwaenepoel I."/>
            <person name="Blanchard S."/>
            <person name="Laine S."/>
            <person name="Richardson G.P."/>
            <person name="Petit C."/>
        </authorList>
    </citation>
    <scope>NUCLEOTIDE SEQUENCE [MRNA]</scope>
    <source>
        <strain>129/Sv</strain>
    </source>
</reference>
<reference key="2">
    <citation type="journal article" date="2009" name="PLoS Biol.">
        <title>Lineage-specific biology revealed by a finished genome assembly of the mouse.</title>
        <authorList>
            <person name="Church D.M."/>
            <person name="Goodstadt L."/>
            <person name="Hillier L.W."/>
            <person name="Zody M.C."/>
            <person name="Goldstein S."/>
            <person name="She X."/>
            <person name="Bult C.J."/>
            <person name="Agarwala R."/>
            <person name="Cherry J.L."/>
            <person name="DiCuccio M."/>
            <person name="Hlavina W."/>
            <person name="Kapustin Y."/>
            <person name="Meric P."/>
            <person name="Maglott D."/>
            <person name="Birtle Z."/>
            <person name="Marques A.C."/>
            <person name="Graves T."/>
            <person name="Zhou S."/>
            <person name="Teague B."/>
            <person name="Potamousis K."/>
            <person name="Churas C."/>
            <person name="Place M."/>
            <person name="Herschleb J."/>
            <person name="Runnheim R."/>
            <person name="Forrest D."/>
            <person name="Amos-Landgraf J."/>
            <person name="Schwartz D.C."/>
            <person name="Cheng Z."/>
            <person name="Lindblad-Toh K."/>
            <person name="Eichler E.E."/>
            <person name="Ponting C.P."/>
        </authorList>
    </citation>
    <scope>NUCLEOTIDE SEQUENCE [LARGE SCALE GENOMIC DNA]</scope>
    <source>
        <strain>C57BL/6J</strain>
    </source>
</reference>
<reference key="3">
    <citation type="journal article" date="2004" name="Genome Res.">
        <title>The status, quality, and expansion of the NIH full-length cDNA project: the Mammalian Gene Collection (MGC).</title>
        <authorList>
            <consortium name="The MGC Project Team"/>
        </authorList>
    </citation>
    <scope>NUCLEOTIDE SEQUENCE [LARGE SCALE MRNA]</scope>
    <source>
        <tissue>Brain</tissue>
    </source>
</reference>
<feature type="chain" id="PRO_0000311266" description="Kinocilin">
    <location>
        <begin position="1"/>
        <end position="124"/>
    </location>
</feature>
<feature type="transmembrane region" description="Helical" evidence="1">
    <location>
        <begin position="13"/>
        <end position="33"/>
    </location>
</feature>
<feature type="transmembrane region" description="Helical" evidence="1">
    <location>
        <begin position="40"/>
        <end position="60"/>
    </location>
</feature>
<feature type="region of interest" description="Disordered" evidence="2">
    <location>
        <begin position="80"/>
        <end position="124"/>
    </location>
</feature>
<feature type="compositionally biased region" description="Polar residues" evidence="2">
    <location>
        <begin position="90"/>
        <end position="109"/>
    </location>
</feature>
<feature type="compositionally biased region" description="Basic and acidic residues" evidence="2">
    <location>
        <begin position="110"/>
        <end position="124"/>
    </location>
</feature>
<protein>
    <recommendedName>
        <fullName>Kinocilin</fullName>
    </recommendedName>
</protein>